<reference key="1">
    <citation type="journal article" date="2004" name="Proc. Natl. Acad. Sci. U.S.A.">
        <title>Genomic analysis of Bacteroides fragilis reveals extensive DNA inversions regulating cell surface adaptation.</title>
        <authorList>
            <person name="Kuwahara T."/>
            <person name="Yamashita A."/>
            <person name="Hirakawa H."/>
            <person name="Nakayama H."/>
            <person name="Toh H."/>
            <person name="Okada N."/>
            <person name="Kuhara S."/>
            <person name="Hattori M."/>
            <person name="Hayashi T."/>
            <person name="Ohnishi Y."/>
        </authorList>
    </citation>
    <scope>NUCLEOTIDE SEQUENCE [LARGE SCALE GENOMIC DNA]</scope>
    <source>
        <strain>YCH46</strain>
    </source>
</reference>
<organism>
    <name type="scientific">Bacteroides fragilis (strain YCH46)</name>
    <dbReference type="NCBI Taxonomy" id="295405"/>
    <lineage>
        <taxon>Bacteria</taxon>
        <taxon>Pseudomonadati</taxon>
        <taxon>Bacteroidota</taxon>
        <taxon>Bacteroidia</taxon>
        <taxon>Bacteroidales</taxon>
        <taxon>Bacteroidaceae</taxon>
        <taxon>Bacteroides</taxon>
    </lineage>
</organism>
<dbReference type="EC" id="6.1.1.15" evidence="1"/>
<dbReference type="EMBL" id="AP006841">
    <property type="protein sequence ID" value="BAD49183.1"/>
    <property type="molecule type" value="Genomic_DNA"/>
</dbReference>
<dbReference type="RefSeq" id="WP_005793720.1">
    <property type="nucleotide sequence ID" value="NZ_UYXF01000005.1"/>
</dbReference>
<dbReference type="RefSeq" id="YP_099717.1">
    <property type="nucleotide sequence ID" value="NC_006347.1"/>
</dbReference>
<dbReference type="SMR" id="Q64TJ6"/>
<dbReference type="STRING" id="295405.BF2434"/>
<dbReference type="GeneID" id="60368806"/>
<dbReference type="KEGG" id="bfr:BF2434"/>
<dbReference type="PATRIC" id="fig|295405.11.peg.2352"/>
<dbReference type="HOGENOM" id="CLU_001882_4_2_10"/>
<dbReference type="OrthoDB" id="9809052at2"/>
<dbReference type="Proteomes" id="UP000002197">
    <property type="component" value="Chromosome"/>
</dbReference>
<dbReference type="GO" id="GO:0017101">
    <property type="term" value="C:aminoacyl-tRNA synthetase multienzyme complex"/>
    <property type="evidence" value="ECO:0007669"/>
    <property type="project" value="TreeGrafter"/>
</dbReference>
<dbReference type="GO" id="GO:0005737">
    <property type="term" value="C:cytoplasm"/>
    <property type="evidence" value="ECO:0007669"/>
    <property type="project" value="UniProtKB-SubCell"/>
</dbReference>
<dbReference type="GO" id="GO:0005524">
    <property type="term" value="F:ATP binding"/>
    <property type="evidence" value="ECO:0007669"/>
    <property type="project" value="UniProtKB-UniRule"/>
</dbReference>
<dbReference type="GO" id="GO:0004827">
    <property type="term" value="F:proline-tRNA ligase activity"/>
    <property type="evidence" value="ECO:0007669"/>
    <property type="project" value="UniProtKB-UniRule"/>
</dbReference>
<dbReference type="GO" id="GO:0006433">
    <property type="term" value="P:prolyl-tRNA aminoacylation"/>
    <property type="evidence" value="ECO:0007669"/>
    <property type="project" value="UniProtKB-UniRule"/>
</dbReference>
<dbReference type="CDD" id="cd00862">
    <property type="entry name" value="ProRS_anticodon_zinc"/>
    <property type="match status" value="1"/>
</dbReference>
<dbReference type="CDD" id="cd00778">
    <property type="entry name" value="ProRS_core_arch_euk"/>
    <property type="match status" value="1"/>
</dbReference>
<dbReference type="FunFam" id="3.40.50.800:FF:000005">
    <property type="entry name" value="bifunctional glutamate/proline--tRNA ligase"/>
    <property type="match status" value="1"/>
</dbReference>
<dbReference type="FunFam" id="3.30.930.10:FF:000023">
    <property type="entry name" value="Proline--tRNA ligase"/>
    <property type="match status" value="1"/>
</dbReference>
<dbReference type="Gene3D" id="3.40.50.800">
    <property type="entry name" value="Anticodon-binding domain"/>
    <property type="match status" value="1"/>
</dbReference>
<dbReference type="Gene3D" id="3.30.930.10">
    <property type="entry name" value="Bira Bifunctional Protein, Domain 2"/>
    <property type="match status" value="1"/>
</dbReference>
<dbReference type="Gene3D" id="3.30.110.30">
    <property type="entry name" value="C-terminal domain of ProRS"/>
    <property type="match status" value="1"/>
</dbReference>
<dbReference type="HAMAP" id="MF_01571">
    <property type="entry name" value="Pro_tRNA_synth_type3"/>
    <property type="match status" value="1"/>
</dbReference>
<dbReference type="InterPro" id="IPR002314">
    <property type="entry name" value="aa-tRNA-synt_IIb"/>
</dbReference>
<dbReference type="InterPro" id="IPR006195">
    <property type="entry name" value="aa-tRNA-synth_II"/>
</dbReference>
<dbReference type="InterPro" id="IPR045864">
    <property type="entry name" value="aa-tRNA-synth_II/BPL/LPL"/>
</dbReference>
<dbReference type="InterPro" id="IPR004154">
    <property type="entry name" value="Anticodon-bd"/>
</dbReference>
<dbReference type="InterPro" id="IPR036621">
    <property type="entry name" value="Anticodon-bd_dom_sf"/>
</dbReference>
<dbReference type="InterPro" id="IPR004499">
    <property type="entry name" value="Pro-tRNA-ligase_IIa_arc-type"/>
</dbReference>
<dbReference type="InterPro" id="IPR016061">
    <property type="entry name" value="Pro-tRNA_ligase_II_C"/>
</dbReference>
<dbReference type="InterPro" id="IPR017449">
    <property type="entry name" value="Pro-tRNA_synth_II"/>
</dbReference>
<dbReference type="InterPro" id="IPR033721">
    <property type="entry name" value="ProRS_core_arch_euk"/>
</dbReference>
<dbReference type="NCBIfam" id="TIGR00408">
    <property type="entry name" value="proS_fam_I"/>
    <property type="match status" value="1"/>
</dbReference>
<dbReference type="PANTHER" id="PTHR43382:SF2">
    <property type="entry name" value="BIFUNCTIONAL GLUTAMATE_PROLINE--TRNA LIGASE"/>
    <property type="match status" value="1"/>
</dbReference>
<dbReference type="PANTHER" id="PTHR43382">
    <property type="entry name" value="PROLYL-TRNA SYNTHETASE"/>
    <property type="match status" value="1"/>
</dbReference>
<dbReference type="Pfam" id="PF03129">
    <property type="entry name" value="HGTP_anticodon"/>
    <property type="match status" value="1"/>
</dbReference>
<dbReference type="Pfam" id="PF09180">
    <property type="entry name" value="ProRS-C_1"/>
    <property type="match status" value="1"/>
</dbReference>
<dbReference type="Pfam" id="PF00587">
    <property type="entry name" value="tRNA-synt_2b"/>
    <property type="match status" value="1"/>
</dbReference>
<dbReference type="SMART" id="SM00946">
    <property type="entry name" value="ProRS-C_1"/>
    <property type="match status" value="1"/>
</dbReference>
<dbReference type="SUPFAM" id="SSF64586">
    <property type="entry name" value="C-terminal domain of ProRS"/>
    <property type="match status" value="1"/>
</dbReference>
<dbReference type="SUPFAM" id="SSF52954">
    <property type="entry name" value="Class II aaRS ABD-related"/>
    <property type="match status" value="1"/>
</dbReference>
<dbReference type="SUPFAM" id="SSF55681">
    <property type="entry name" value="Class II aaRS and biotin synthetases"/>
    <property type="match status" value="1"/>
</dbReference>
<dbReference type="PROSITE" id="PS50862">
    <property type="entry name" value="AA_TRNA_LIGASE_II"/>
    <property type="match status" value="1"/>
</dbReference>
<feature type="chain" id="PRO_0000249121" description="Proline--tRNA ligase">
    <location>
        <begin position="1"/>
        <end position="497"/>
    </location>
</feature>
<gene>
    <name evidence="1" type="primary">proS</name>
    <name type="ordered locus">BF2434</name>
</gene>
<accession>Q64TJ6</accession>
<evidence type="ECO:0000255" key="1">
    <source>
        <dbReference type="HAMAP-Rule" id="MF_01571"/>
    </source>
</evidence>
<keyword id="KW-0030">Aminoacyl-tRNA synthetase</keyword>
<keyword id="KW-0067">ATP-binding</keyword>
<keyword id="KW-0963">Cytoplasm</keyword>
<keyword id="KW-0436">Ligase</keyword>
<keyword id="KW-0547">Nucleotide-binding</keyword>
<keyword id="KW-0648">Protein biosynthesis</keyword>
<sequence length="497" mass="56954">MAKELKDLTKRSENYSQWYNDLVVKADLAEQSAVRGCMVIKPYGYAIWEKMQRQLDDMFKETGHVNAYFPLLIPKSFLSREAEHVEGFAKECAVVTHYRLKNAEDGSGVVVDPAAKLEEELIIRPTSETIIWNTYKNWIQSYRDLPILCNQWANVFRWEMRTRLFLRTAEFLWQEGHTAHATREEAEEEAIRMLNVYAEFAEKYMAVPVVKGVKSANERFAGALDTYTIEAMMQDGKALQSGTSHFLGQNFAKAFDVQFVNKENKLEYVWATSWGVSTRLMGALIMTHSDDNGLVLPPHLAPIQVVIVPIYKNDEQLKLIDAKVEGIVARLKQLGISVKYDNADNKRPGFKFADYELKGVPVRLVMGGRDLENNTMEVMRRDTLEKETVTCDGIETYVQNLLEEIQANIYKKARTYRDSRITTVDSYDEFKEKIEEGGFILAHWDGTVETEEKIKEETKATIRCIPFESFVEGDKEPGKCMVTGKPSACRVIFARSY</sequence>
<proteinExistence type="inferred from homology"/>
<protein>
    <recommendedName>
        <fullName evidence="1">Proline--tRNA ligase</fullName>
        <ecNumber evidence="1">6.1.1.15</ecNumber>
    </recommendedName>
    <alternativeName>
        <fullName evidence="1">Prolyl-tRNA synthetase</fullName>
        <shortName evidence="1">ProRS</shortName>
    </alternativeName>
</protein>
<name>SYP_BACFR</name>
<comment type="function">
    <text evidence="1">Catalyzes the attachment of proline to tRNA(Pro) in a two-step reaction: proline is first activated by ATP to form Pro-AMP and then transferred to the acceptor end of tRNA(Pro).</text>
</comment>
<comment type="catalytic activity">
    <reaction evidence="1">
        <text>tRNA(Pro) + L-proline + ATP = L-prolyl-tRNA(Pro) + AMP + diphosphate</text>
        <dbReference type="Rhea" id="RHEA:14305"/>
        <dbReference type="Rhea" id="RHEA-COMP:9700"/>
        <dbReference type="Rhea" id="RHEA-COMP:9702"/>
        <dbReference type="ChEBI" id="CHEBI:30616"/>
        <dbReference type="ChEBI" id="CHEBI:33019"/>
        <dbReference type="ChEBI" id="CHEBI:60039"/>
        <dbReference type="ChEBI" id="CHEBI:78442"/>
        <dbReference type="ChEBI" id="CHEBI:78532"/>
        <dbReference type="ChEBI" id="CHEBI:456215"/>
        <dbReference type="EC" id="6.1.1.15"/>
    </reaction>
</comment>
<comment type="subunit">
    <text evidence="1">Homodimer.</text>
</comment>
<comment type="subcellular location">
    <subcellularLocation>
        <location evidence="1">Cytoplasm</location>
    </subcellularLocation>
</comment>
<comment type="domain">
    <text evidence="1">Consists of three domains: the N-terminal catalytic domain, the anticodon-binding domain and the C-terminal extension.</text>
</comment>
<comment type="similarity">
    <text evidence="1">Belongs to the class-II aminoacyl-tRNA synthetase family. ProS type 3 subfamily.</text>
</comment>